<comment type="function">
    <text evidence="1">Assembles around the rod to form the L-ring and probably protects the motor/basal body from shearing forces during rotation.</text>
</comment>
<comment type="subunit">
    <text evidence="1">The basal body constitutes a major portion of the flagellar organelle and consists of four rings (L,P,S, and M) mounted on a central rod.</text>
</comment>
<comment type="subcellular location">
    <subcellularLocation>
        <location evidence="1">Cell outer membrane</location>
        <topology evidence="1">Lipid-anchor</topology>
    </subcellularLocation>
    <subcellularLocation>
        <location evidence="1">Bacterial flagellum basal body</location>
    </subcellularLocation>
</comment>
<comment type="similarity">
    <text evidence="1">Belongs to the FlgH family.</text>
</comment>
<name>FLGH_NITWN</name>
<feature type="signal peptide" evidence="1">
    <location>
        <begin position="1"/>
        <end position="25"/>
    </location>
</feature>
<feature type="chain" id="PRO_0000236824" description="Flagellar L-ring protein">
    <location>
        <begin position="26"/>
        <end position="252"/>
    </location>
</feature>
<feature type="lipid moiety-binding region" description="N-palmitoyl cysteine" evidence="1">
    <location>
        <position position="26"/>
    </location>
</feature>
<feature type="lipid moiety-binding region" description="S-diacylglycerol cysteine" evidence="1">
    <location>
        <position position="26"/>
    </location>
</feature>
<organism>
    <name type="scientific">Nitrobacter winogradskyi (strain ATCC 25391 / DSM 10237 / CIP 104748 / NCIMB 11846 / Nb-255)</name>
    <dbReference type="NCBI Taxonomy" id="323098"/>
    <lineage>
        <taxon>Bacteria</taxon>
        <taxon>Pseudomonadati</taxon>
        <taxon>Pseudomonadota</taxon>
        <taxon>Alphaproteobacteria</taxon>
        <taxon>Hyphomicrobiales</taxon>
        <taxon>Nitrobacteraceae</taxon>
        <taxon>Nitrobacter</taxon>
    </lineage>
</organism>
<sequence length="252" mass="27222">MLKLASLNRIVLTGTLLAAAGLASGCSSIDRLSQIGESPKLTAIDNPTTQPGYKPVQMPMPKPETVSYNANSLWRNGSRAFFRDQRAARVGDLLTVTVNFTDRANIANQTQRSRVSKDDSGIADFAGSKLLGGTAQKVLPGRLLTTDSESLSDGKGLVQRQENLQTSVATVVTQVLPNGNLVVEGKQEIRVNFEIRELIVAGIVRPEDIQSDNTIDSSKIAQARIAYGGRGQITDVQQPRYGQQVMDVLLPF</sequence>
<gene>
    <name evidence="1" type="primary">flgH</name>
    <name type="ordered locus">Nwi_1119</name>
</gene>
<evidence type="ECO:0000255" key="1">
    <source>
        <dbReference type="HAMAP-Rule" id="MF_00415"/>
    </source>
</evidence>
<proteinExistence type="inferred from homology"/>
<reference key="1">
    <citation type="journal article" date="2006" name="Appl. Environ. Microbiol.">
        <title>Genome sequence of the chemolithoautotrophic nitrite-oxidizing bacterium Nitrobacter winogradskyi Nb-255.</title>
        <authorList>
            <person name="Starkenburg S.R."/>
            <person name="Chain P.S.G."/>
            <person name="Sayavedra-Soto L.A."/>
            <person name="Hauser L."/>
            <person name="Land M.L."/>
            <person name="Larimer F.W."/>
            <person name="Malfatti S.A."/>
            <person name="Klotz M.G."/>
            <person name="Bottomley P.J."/>
            <person name="Arp D.J."/>
            <person name="Hickey W.J."/>
        </authorList>
    </citation>
    <scope>NUCLEOTIDE SEQUENCE [LARGE SCALE GENOMIC DNA]</scope>
    <source>
        <strain>ATCC 25391 / DSM 10237 / CIP 104748 / NCIMB 11846 / Nb-255</strain>
    </source>
</reference>
<protein>
    <recommendedName>
        <fullName evidence="1">Flagellar L-ring protein</fullName>
    </recommendedName>
    <alternativeName>
        <fullName evidence="1">Basal body L-ring protein</fullName>
    </alternativeName>
</protein>
<dbReference type="EMBL" id="CP000115">
    <property type="protein sequence ID" value="ABA04381.1"/>
    <property type="molecule type" value="Genomic_DNA"/>
</dbReference>
<dbReference type="RefSeq" id="WP_011314412.1">
    <property type="nucleotide sequence ID" value="NC_007406.1"/>
</dbReference>
<dbReference type="SMR" id="Q3STL0"/>
<dbReference type="STRING" id="323098.Nwi_1119"/>
<dbReference type="KEGG" id="nwi:Nwi_1119"/>
<dbReference type="eggNOG" id="COG2063">
    <property type="taxonomic scope" value="Bacteria"/>
</dbReference>
<dbReference type="HOGENOM" id="CLU_069313_1_2_5"/>
<dbReference type="OrthoDB" id="9789227at2"/>
<dbReference type="Proteomes" id="UP000002531">
    <property type="component" value="Chromosome"/>
</dbReference>
<dbReference type="GO" id="GO:0009427">
    <property type="term" value="C:bacterial-type flagellum basal body, distal rod, L ring"/>
    <property type="evidence" value="ECO:0007669"/>
    <property type="project" value="InterPro"/>
</dbReference>
<dbReference type="GO" id="GO:0009279">
    <property type="term" value="C:cell outer membrane"/>
    <property type="evidence" value="ECO:0007669"/>
    <property type="project" value="UniProtKB-SubCell"/>
</dbReference>
<dbReference type="GO" id="GO:0003774">
    <property type="term" value="F:cytoskeletal motor activity"/>
    <property type="evidence" value="ECO:0007669"/>
    <property type="project" value="InterPro"/>
</dbReference>
<dbReference type="GO" id="GO:0071973">
    <property type="term" value="P:bacterial-type flagellum-dependent cell motility"/>
    <property type="evidence" value="ECO:0007669"/>
    <property type="project" value="InterPro"/>
</dbReference>
<dbReference type="HAMAP" id="MF_00415">
    <property type="entry name" value="FlgH"/>
    <property type="match status" value="1"/>
</dbReference>
<dbReference type="InterPro" id="IPR000527">
    <property type="entry name" value="Flag_Lring"/>
</dbReference>
<dbReference type="NCBIfam" id="NF001305">
    <property type="entry name" value="PRK00249.1-5"/>
    <property type="match status" value="1"/>
</dbReference>
<dbReference type="PANTHER" id="PTHR34933">
    <property type="entry name" value="FLAGELLAR L-RING PROTEIN"/>
    <property type="match status" value="1"/>
</dbReference>
<dbReference type="PANTHER" id="PTHR34933:SF1">
    <property type="entry name" value="FLAGELLAR L-RING PROTEIN"/>
    <property type="match status" value="1"/>
</dbReference>
<dbReference type="Pfam" id="PF02107">
    <property type="entry name" value="FlgH"/>
    <property type="match status" value="1"/>
</dbReference>
<dbReference type="PRINTS" id="PR01008">
    <property type="entry name" value="FLGLRINGFLGH"/>
</dbReference>
<dbReference type="PROSITE" id="PS51257">
    <property type="entry name" value="PROKAR_LIPOPROTEIN"/>
    <property type="match status" value="1"/>
</dbReference>
<accession>Q3STL0</accession>
<keyword id="KW-0975">Bacterial flagellum</keyword>
<keyword id="KW-0998">Cell outer membrane</keyword>
<keyword id="KW-0449">Lipoprotein</keyword>
<keyword id="KW-0472">Membrane</keyword>
<keyword id="KW-0564">Palmitate</keyword>
<keyword id="KW-1185">Reference proteome</keyword>
<keyword id="KW-0732">Signal</keyword>